<name>RUVB_FRAAA</name>
<dbReference type="EC" id="3.6.4.-" evidence="1"/>
<dbReference type="EMBL" id="CT573213">
    <property type="protein sequence ID" value="CAJ60790.1"/>
    <property type="molecule type" value="Genomic_DNA"/>
</dbReference>
<dbReference type="RefSeq" id="WP_011603306.1">
    <property type="nucleotide sequence ID" value="NC_008278.1"/>
</dbReference>
<dbReference type="SMR" id="Q0RNU6"/>
<dbReference type="STRING" id="326424.FRAAL2141"/>
<dbReference type="KEGG" id="fal:FRAAL2141"/>
<dbReference type="eggNOG" id="COG2255">
    <property type="taxonomic scope" value="Bacteria"/>
</dbReference>
<dbReference type="HOGENOM" id="CLU_055599_1_0_11"/>
<dbReference type="OrthoDB" id="9804478at2"/>
<dbReference type="Proteomes" id="UP000000657">
    <property type="component" value="Chromosome"/>
</dbReference>
<dbReference type="GO" id="GO:0005737">
    <property type="term" value="C:cytoplasm"/>
    <property type="evidence" value="ECO:0007669"/>
    <property type="project" value="UniProtKB-SubCell"/>
</dbReference>
<dbReference type="GO" id="GO:0048476">
    <property type="term" value="C:Holliday junction resolvase complex"/>
    <property type="evidence" value="ECO:0007669"/>
    <property type="project" value="UniProtKB-UniRule"/>
</dbReference>
<dbReference type="GO" id="GO:0005524">
    <property type="term" value="F:ATP binding"/>
    <property type="evidence" value="ECO:0007669"/>
    <property type="project" value="UniProtKB-UniRule"/>
</dbReference>
<dbReference type="GO" id="GO:0016887">
    <property type="term" value="F:ATP hydrolysis activity"/>
    <property type="evidence" value="ECO:0007669"/>
    <property type="project" value="InterPro"/>
</dbReference>
<dbReference type="GO" id="GO:0000400">
    <property type="term" value="F:four-way junction DNA binding"/>
    <property type="evidence" value="ECO:0007669"/>
    <property type="project" value="UniProtKB-UniRule"/>
</dbReference>
<dbReference type="GO" id="GO:0009378">
    <property type="term" value="F:four-way junction helicase activity"/>
    <property type="evidence" value="ECO:0007669"/>
    <property type="project" value="InterPro"/>
</dbReference>
<dbReference type="GO" id="GO:0006310">
    <property type="term" value="P:DNA recombination"/>
    <property type="evidence" value="ECO:0007669"/>
    <property type="project" value="UniProtKB-UniRule"/>
</dbReference>
<dbReference type="GO" id="GO:0006281">
    <property type="term" value="P:DNA repair"/>
    <property type="evidence" value="ECO:0007669"/>
    <property type="project" value="UniProtKB-UniRule"/>
</dbReference>
<dbReference type="CDD" id="cd00009">
    <property type="entry name" value="AAA"/>
    <property type="match status" value="1"/>
</dbReference>
<dbReference type="Gene3D" id="1.10.8.60">
    <property type="match status" value="1"/>
</dbReference>
<dbReference type="Gene3D" id="3.40.50.300">
    <property type="entry name" value="P-loop containing nucleotide triphosphate hydrolases"/>
    <property type="match status" value="1"/>
</dbReference>
<dbReference type="Gene3D" id="1.10.10.10">
    <property type="entry name" value="Winged helix-like DNA-binding domain superfamily/Winged helix DNA-binding domain"/>
    <property type="match status" value="1"/>
</dbReference>
<dbReference type="HAMAP" id="MF_00016">
    <property type="entry name" value="DNA_HJ_migration_RuvB"/>
    <property type="match status" value="1"/>
</dbReference>
<dbReference type="InterPro" id="IPR003593">
    <property type="entry name" value="AAA+_ATPase"/>
</dbReference>
<dbReference type="InterPro" id="IPR041445">
    <property type="entry name" value="AAA_lid_4"/>
</dbReference>
<dbReference type="InterPro" id="IPR004605">
    <property type="entry name" value="DNA_helicase_Holl-junc_RuvB"/>
</dbReference>
<dbReference type="InterPro" id="IPR027417">
    <property type="entry name" value="P-loop_NTPase"/>
</dbReference>
<dbReference type="InterPro" id="IPR008824">
    <property type="entry name" value="RuvB-like_N"/>
</dbReference>
<dbReference type="InterPro" id="IPR008823">
    <property type="entry name" value="RuvB_C"/>
</dbReference>
<dbReference type="InterPro" id="IPR036388">
    <property type="entry name" value="WH-like_DNA-bd_sf"/>
</dbReference>
<dbReference type="InterPro" id="IPR036390">
    <property type="entry name" value="WH_DNA-bd_sf"/>
</dbReference>
<dbReference type="NCBIfam" id="NF000868">
    <property type="entry name" value="PRK00080.1"/>
    <property type="match status" value="1"/>
</dbReference>
<dbReference type="NCBIfam" id="TIGR00635">
    <property type="entry name" value="ruvB"/>
    <property type="match status" value="1"/>
</dbReference>
<dbReference type="PANTHER" id="PTHR42848">
    <property type="match status" value="1"/>
</dbReference>
<dbReference type="PANTHER" id="PTHR42848:SF1">
    <property type="entry name" value="HOLLIDAY JUNCTION BRANCH MIGRATION COMPLEX SUBUNIT RUVB"/>
    <property type="match status" value="1"/>
</dbReference>
<dbReference type="Pfam" id="PF17864">
    <property type="entry name" value="AAA_lid_4"/>
    <property type="match status" value="1"/>
</dbReference>
<dbReference type="Pfam" id="PF05491">
    <property type="entry name" value="RuvB_C"/>
    <property type="match status" value="1"/>
</dbReference>
<dbReference type="Pfam" id="PF05496">
    <property type="entry name" value="RuvB_N"/>
    <property type="match status" value="1"/>
</dbReference>
<dbReference type="PRINTS" id="PR00830">
    <property type="entry name" value="ENDOLAPTASE"/>
</dbReference>
<dbReference type="SMART" id="SM00382">
    <property type="entry name" value="AAA"/>
    <property type="match status" value="1"/>
</dbReference>
<dbReference type="SUPFAM" id="SSF52540">
    <property type="entry name" value="P-loop containing nucleoside triphosphate hydrolases"/>
    <property type="match status" value="1"/>
</dbReference>
<dbReference type="SUPFAM" id="SSF46785">
    <property type="entry name" value="Winged helix' DNA-binding domain"/>
    <property type="match status" value="1"/>
</dbReference>
<protein>
    <recommendedName>
        <fullName evidence="1">Holliday junction branch migration complex subunit RuvB</fullName>
        <ecNumber evidence="1">3.6.4.-</ecNumber>
    </recommendedName>
</protein>
<feature type="chain" id="PRO_0000322794" description="Holliday junction branch migration complex subunit RuvB">
    <location>
        <begin position="1"/>
        <end position="366"/>
    </location>
</feature>
<feature type="region of interest" description="Large ATPase domain (RuvB-L)" evidence="1">
    <location>
        <begin position="3"/>
        <end position="183"/>
    </location>
</feature>
<feature type="region of interest" description="Small ATPAse domain (RuvB-S)" evidence="1">
    <location>
        <begin position="184"/>
        <end position="254"/>
    </location>
</feature>
<feature type="region of interest" description="Head domain (RuvB-H)" evidence="1">
    <location>
        <begin position="257"/>
        <end position="366"/>
    </location>
</feature>
<feature type="binding site" evidence="1">
    <location>
        <position position="22"/>
    </location>
    <ligand>
        <name>ATP</name>
        <dbReference type="ChEBI" id="CHEBI:30616"/>
    </ligand>
</feature>
<feature type="binding site" evidence="1">
    <location>
        <position position="23"/>
    </location>
    <ligand>
        <name>ATP</name>
        <dbReference type="ChEBI" id="CHEBI:30616"/>
    </ligand>
</feature>
<feature type="binding site" evidence="1">
    <location>
        <position position="64"/>
    </location>
    <ligand>
        <name>ATP</name>
        <dbReference type="ChEBI" id="CHEBI:30616"/>
    </ligand>
</feature>
<feature type="binding site" evidence="1">
    <location>
        <position position="67"/>
    </location>
    <ligand>
        <name>ATP</name>
        <dbReference type="ChEBI" id="CHEBI:30616"/>
    </ligand>
</feature>
<feature type="binding site" evidence="1">
    <location>
        <position position="68"/>
    </location>
    <ligand>
        <name>ATP</name>
        <dbReference type="ChEBI" id="CHEBI:30616"/>
    </ligand>
</feature>
<feature type="binding site" evidence="1">
    <location>
        <position position="68"/>
    </location>
    <ligand>
        <name>Mg(2+)</name>
        <dbReference type="ChEBI" id="CHEBI:18420"/>
    </ligand>
</feature>
<feature type="binding site" evidence="1">
    <location>
        <position position="69"/>
    </location>
    <ligand>
        <name>ATP</name>
        <dbReference type="ChEBI" id="CHEBI:30616"/>
    </ligand>
</feature>
<feature type="binding site" evidence="1">
    <location>
        <begin position="130"/>
        <end position="132"/>
    </location>
    <ligand>
        <name>ATP</name>
        <dbReference type="ChEBI" id="CHEBI:30616"/>
    </ligand>
</feature>
<feature type="binding site" evidence="1">
    <location>
        <position position="173"/>
    </location>
    <ligand>
        <name>ATP</name>
        <dbReference type="ChEBI" id="CHEBI:30616"/>
    </ligand>
</feature>
<feature type="binding site" evidence="1">
    <location>
        <position position="183"/>
    </location>
    <ligand>
        <name>ATP</name>
        <dbReference type="ChEBI" id="CHEBI:30616"/>
    </ligand>
</feature>
<feature type="binding site" evidence="1">
    <location>
        <position position="220"/>
    </location>
    <ligand>
        <name>ATP</name>
        <dbReference type="ChEBI" id="CHEBI:30616"/>
    </ligand>
</feature>
<feature type="binding site" evidence="1">
    <location>
        <position position="312"/>
    </location>
    <ligand>
        <name>DNA</name>
        <dbReference type="ChEBI" id="CHEBI:16991"/>
    </ligand>
</feature>
<feature type="binding site" evidence="1">
    <location>
        <position position="317"/>
    </location>
    <ligand>
        <name>DNA</name>
        <dbReference type="ChEBI" id="CHEBI:16991"/>
    </ligand>
</feature>
<proteinExistence type="inferred from homology"/>
<organism>
    <name type="scientific">Frankia alni (strain DSM 45986 / CECT 9034 / ACN14a)</name>
    <dbReference type="NCBI Taxonomy" id="326424"/>
    <lineage>
        <taxon>Bacteria</taxon>
        <taxon>Bacillati</taxon>
        <taxon>Actinomycetota</taxon>
        <taxon>Actinomycetes</taxon>
        <taxon>Frankiales</taxon>
        <taxon>Frankiaceae</taxon>
        <taxon>Frankia</taxon>
    </lineage>
</organism>
<sequence length="366" mass="38487">MSADGLVSAAASAEEQAFEAGLRPRTLTEFVGQRKVREQLSIMLEGAQARGRPPDHVLLSGPPGLGKTSLAMIIAEELAVPLRMTSGPAIERAGDLVAILTALSPGEVLFLDEIHRIARPAEELLYAAMEDFRVDVILGKGPGATAIPLDVAPFTLVGATTRSGLLTGPLRDRFGFTAHLDFYAPDELARVLTRSAGLLGVSLTEDGAAEVAGRSRGTPRIANRLLRRVRDYAEVRADGVVTRDVARAALRIYDVDGLGLDRLDRAVLEALVGRFGGGPVGLTTLAVSVGEEPETVEDVAEPFLLRAGLLIRTSRGRIATPAAFEHLGLEPVADPLGRSQAPLFSNTGLLAEGGLLPEDGLHPGGG</sequence>
<comment type="function">
    <text evidence="1">The RuvA-RuvB-RuvC complex processes Holliday junction (HJ) DNA during genetic recombination and DNA repair, while the RuvA-RuvB complex plays an important role in the rescue of blocked DNA replication forks via replication fork reversal (RFR). RuvA specifically binds to HJ cruciform DNA, conferring on it an open structure. The RuvB hexamer acts as an ATP-dependent pump, pulling dsDNA into and through the RuvAB complex. RuvB forms 2 homohexamers on either side of HJ DNA bound by 1 or 2 RuvA tetramers; 4 subunits per hexamer contact DNA at a time. Coordinated motions by a converter formed by DNA-disengaged RuvB subunits stimulates ATP hydrolysis and nucleotide exchange. Immobilization of the converter enables RuvB to convert the ATP-contained energy into a lever motion, pulling 2 nucleotides of DNA out of the RuvA tetramer per ATP hydrolyzed, thus driving DNA branch migration. The RuvB motors rotate together with the DNA substrate, which together with the progressing nucleotide cycle form the mechanistic basis for DNA recombination by continuous HJ branch migration. Branch migration allows RuvC to scan DNA until it finds its consensus sequence, where it cleaves and resolves cruciform DNA.</text>
</comment>
<comment type="catalytic activity">
    <reaction evidence="1">
        <text>ATP + H2O = ADP + phosphate + H(+)</text>
        <dbReference type="Rhea" id="RHEA:13065"/>
        <dbReference type="ChEBI" id="CHEBI:15377"/>
        <dbReference type="ChEBI" id="CHEBI:15378"/>
        <dbReference type="ChEBI" id="CHEBI:30616"/>
        <dbReference type="ChEBI" id="CHEBI:43474"/>
        <dbReference type="ChEBI" id="CHEBI:456216"/>
    </reaction>
</comment>
<comment type="subunit">
    <text evidence="1">Homohexamer. Forms an RuvA(8)-RuvB(12)-Holliday junction (HJ) complex. HJ DNA is sandwiched between 2 RuvA tetramers; dsDNA enters through RuvA and exits via RuvB. An RuvB hexamer assembles on each DNA strand where it exits the tetramer. Each RuvB hexamer is contacted by two RuvA subunits (via domain III) on 2 adjacent RuvB subunits; this complex drives branch migration. In the full resolvosome a probable DNA-RuvA(4)-RuvB(12)-RuvC(2) complex forms which resolves the HJ.</text>
</comment>
<comment type="subcellular location">
    <subcellularLocation>
        <location evidence="1">Cytoplasm</location>
    </subcellularLocation>
</comment>
<comment type="domain">
    <text evidence="1">Has 3 domains, the large (RuvB-L) and small ATPase (RuvB-S) domains and the C-terminal head (RuvB-H) domain. The head domain binds DNA, while the ATPase domains jointly bind ATP, ADP or are empty depending on the state of the subunit in the translocation cycle. During a single DNA translocation step the structure of each domain remains the same, but their relative positions change.</text>
</comment>
<comment type="similarity">
    <text evidence="1">Belongs to the RuvB family.</text>
</comment>
<evidence type="ECO:0000255" key="1">
    <source>
        <dbReference type="HAMAP-Rule" id="MF_00016"/>
    </source>
</evidence>
<accession>Q0RNU6</accession>
<reference key="1">
    <citation type="journal article" date="2007" name="Genome Res.">
        <title>Genome characteristics of facultatively symbiotic Frankia sp. strains reflect host range and host plant biogeography.</title>
        <authorList>
            <person name="Normand P."/>
            <person name="Lapierre P."/>
            <person name="Tisa L.S."/>
            <person name="Gogarten J.P."/>
            <person name="Alloisio N."/>
            <person name="Bagnarol E."/>
            <person name="Bassi C.A."/>
            <person name="Berry A.M."/>
            <person name="Bickhart D.M."/>
            <person name="Choisne N."/>
            <person name="Couloux A."/>
            <person name="Cournoyer B."/>
            <person name="Cruveiller S."/>
            <person name="Daubin V."/>
            <person name="Demange N."/>
            <person name="Francino M.P."/>
            <person name="Goltsman E."/>
            <person name="Huang Y."/>
            <person name="Kopp O.R."/>
            <person name="Labarre L."/>
            <person name="Lapidus A."/>
            <person name="Lavire C."/>
            <person name="Marechal J."/>
            <person name="Martinez M."/>
            <person name="Mastronunzio J.E."/>
            <person name="Mullin B.C."/>
            <person name="Niemann J."/>
            <person name="Pujic P."/>
            <person name="Rawnsley T."/>
            <person name="Rouy Z."/>
            <person name="Schenowitz C."/>
            <person name="Sellstedt A."/>
            <person name="Tavares F."/>
            <person name="Tomkins J.P."/>
            <person name="Vallenet D."/>
            <person name="Valverde C."/>
            <person name="Wall L.G."/>
            <person name="Wang Y."/>
            <person name="Medigue C."/>
            <person name="Benson D.R."/>
        </authorList>
    </citation>
    <scope>NUCLEOTIDE SEQUENCE [LARGE SCALE GENOMIC DNA]</scope>
    <source>
        <strain>DSM 45986 / CECT 9034 / ACN14a</strain>
    </source>
</reference>
<keyword id="KW-0067">ATP-binding</keyword>
<keyword id="KW-0963">Cytoplasm</keyword>
<keyword id="KW-0227">DNA damage</keyword>
<keyword id="KW-0233">DNA recombination</keyword>
<keyword id="KW-0234">DNA repair</keyword>
<keyword id="KW-0238">DNA-binding</keyword>
<keyword id="KW-0378">Hydrolase</keyword>
<keyword id="KW-0547">Nucleotide-binding</keyword>
<keyword id="KW-1185">Reference proteome</keyword>
<gene>
    <name evidence="1" type="primary">ruvB</name>
    <name type="ordered locus">FRAAL2141</name>
</gene>